<accession>C3LI11</accession>
<name>COXX_BACAC</name>
<proteinExistence type="inferred from homology"/>
<reference key="1">
    <citation type="submission" date="2008-10" db="EMBL/GenBank/DDBJ databases">
        <title>Genome sequence of Bacillus anthracis str. CDC 684.</title>
        <authorList>
            <person name="Dodson R.J."/>
            <person name="Munk A.C."/>
            <person name="Brettin T."/>
            <person name="Bruce D."/>
            <person name="Detter C."/>
            <person name="Tapia R."/>
            <person name="Han C."/>
            <person name="Sutton G."/>
            <person name="Sims D."/>
        </authorList>
    </citation>
    <scope>NUCLEOTIDE SEQUENCE [LARGE SCALE GENOMIC DNA]</scope>
    <source>
        <strain>CDC 684 / NRRL 3495</strain>
    </source>
</reference>
<feature type="chain" id="PRO_1000199638" description="Protoheme IX farnesyltransferase">
    <location>
        <begin position="1"/>
        <end position="307"/>
    </location>
</feature>
<feature type="transmembrane region" description="Helical" evidence="1">
    <location>
        <begin position="32"/>
        <end position="52"/>
    </location>
</feature>
<feature type="transmembrane region" description="Helical" evidence="1">
    <location>
        <begin position="65"/>
        <end position="85"/>
    </location>
</feature>
<feature type="transmembrane region" description="Helical" evidence="1">
    <location>
        <begin position="108"/>
        <end position="128"/>
    </location>
</feature>
<feature type="transmembrane region" description="Helical" evidence="1">
    <location>
        <begin position="131"/>
        <end position="151"/>
    </location>
</feature>
<feature type="transmembrane region" description="Helical" evidence="1">
    <location>
        <begin position="158"/>
        <end position="178"/>
    </location>
</feature>
<feature type="transmembrane region" description="Helical" evidence="1">
    <location>
        <begin position="186"/>
        <end position="206"/>
    </location>
</feature>
<feature type="transmembrane region" description="Helical" evidence="1">
    <location>
        <begin position="251"/>
        <end position="271"/>
    </location>
</feature>
<feature type="transmembrane region" description="Helical" evidence="1">
    <location>
        <begin position="287"/>
        <end position="307"/>
    </location>
</feature>
<organism>
    <name type="scientific">Bacillus anthracis (strain CDC 684 / NRRL 3495)</name>
    <dbReference type="NCBI Taxonomy" id="568206"/>
    <lineage>
        <taxon>Bacteria</taxon>
        <taxon>Bacillati</taxon>
        <taxon>Bacillota</taxon>
        <taxon>Bacilli</taxon>
        <taxon>Bacillales</taxon>
        <taxon>Bacillaceae</taxon>
        <taxon>Bacillus</taxon>
        <taxon>Bacillus cereus group</taxon>
    </lineage>
</organism>
<comment type="function">
    <text evidence="1">Converts heme B (protoheme IX) to heme O by substitution of the vinyl group on carbon 2 of heme B porphyrin ring with a hydroxyethyl farnesyl side group.</text>
</comment>
<comment type="catalytic activity">
    <reaction evidence="1">
        <text>heme b + (2E,6E)-farnesyl diphosphate + H2O = Fe(II)-heme o + diphosphate</text>
        <dbReference type="Rhea" id="RHEA:28070"/>
        <dbReference type="ChEBI" id="CHEBI:15377"/>
        <dbReference type="ChEBI" id="CHEBI:33019"/>
        <dbReference type="ChEBI" id="CHEBI:60344"/>
        <dbReference type="ChEBI" id="CHEBI:60530"/>
        <dbReference type="ChEBI" id="CHEBI:175763"/>
        <dbReference type="EC" id="2.5.1.141"/>
    </reaction>
</comment>
<comment type="pathway">
    <text evidence="1">Porphyrin-containing compound metabolism; heme O biosynthesis; heme O from protoheme: step 1/1.</text>
</comment>
<comment type="subunit">
    <text evidence="1">Interacts with CtaA.</text>
</comment>
<comment type="subcellular location">
    <subcellularLocation>
        <location evidence="1">Cell membrane</location>
        <topology evidence="1">Multi-pass membrane protein</topology>
    </subcellularLocation>
</comment>
<comment type="miscellaneous">
    <text evidence="1">Carbon 2 of the heme B porphyrin ring is defined according to the Fischer nomenclature.</text>
</comment>
<comment type="similarity">
    <text evidence="1">Belongs to the UbiA prenyltransferase family. Protoheme IX farnesyltransferase subfamily.</text>
</comment>
<gene>
    <name evidence="1" type="primary">ctaB</name>
    <name type="ordered locus">BAMEG_4198</name>
</gene>
<keyword id="KW-1003">Cell membrane</keyword>
<keyword id="KW-0350">Heme biosynthesis</keyword>
<keyword id="KW-0472">Membrane</keyword>
<keyword id="KW-0808">Transferase</keyword>
<keyword id="KW-0812">Transmembrane</keyword>
<keyword id="KW-1133">Transmembrane helix</keyword>
<dbReference type="EC" id="2.5.1.141" evidence="1"/>
<dbReference type="EMBL" id="CP001215">
    <property type="protein sequence ID" value="ACP12205.1"/>
    <property type="molecule type" value="Genomic_DNA"/>
</dbReference>
<dbReference type="RefSeq" id="WP_001015052.1">
    <property type="nucleotide sequence ID" value="NC_012581.1"/>
</dbReference>
<dbReference type="SMR" id="C3LI11"/>
<dbReference type="GeneID" id="45023832"/>
<dbReference type="KEGG" id="bah:BAMEG_4198"/>
<dbReference type="HOGENOM" id="CLU_029631_0_0_9"/>
<dbReference type="UniPathway" id="UPA00834">
    <property type="reaction ID" value="UER00712"/>
</dbReference>
<dbReference type="GO" id="GO:0005886">
    <property type="term" value="C:plasma membrane"/>
    <property type="evidence" value="ECO:0007669"/>
    <property type="project" value="UniProtKB-SubCell"/>
</dbReference>
<dbReference type="GO" id="GO:0008495">
    <property type="term" value="F:protoheme IX farnesyltransferase activity"/>
    <property type="evidence" value="ECO:0007669"/>
    <property type="project" value="UniProtKB-UniRule"/>
</dbReference>
<dbReference type="GO" id="GO:0048034">
    <property type="term" value="P:heme O biosynthetic process"/>
    <property type="evidence" value="ECO:0007669"/>
    <property type="project" value="UniProtKB-UniRule"/>
</dbReference>
<dbReference type="CDD" id="cd13957">
    <property type="entry name" value="PT_UbiA_Cox10"/>
    <property type="match status" value="1"/>
</dbReference>
<dbReference type="FunFam" id="1.10.357.140:FF:000001">
    <property type="entry name" value="Protoheme IX farnesyltransferase"/>
    <property type="match status" value="1"/>
</dbReference>
<dbReference type="Gene3D" id="1.10.357.140">
    <property type="entry name" value="UbiA prenyltransferase"/>
    <property type="match status" value="1"/>
</dbReference>
<dbReference type="HAMAP" id="MF_00154">
    <property type="entry name" value="CyoE_CtaB"/>
    <property type="match status" value="1"/>
</dbReference>
<dbReference type="InterPro" id="IPR006369">
    <property type="entry name" value="Protohaem_IX_farnesylTrfase"/>
</dbReference>
<dbReference type="InterPro" id="IPR000537">
    <property type="entry name" value="UbiA_prenyltransferase"/>
</dbReference>
<dbReference type="InterPro" id="IPR030470">
    <property type="entry name" value="UbiA_prenylTrfase_CS"/>
</dbReference>
<dbReference type="InterPro" id="IPR044878">
    <property type="entry name" value="UbiA_sf"/>
</dbReference>
<dbReference type="NCBIfam" id="TIGR01473">
    <property type="entry name" value="cyoE_ctaB"/>
    <property type="match status" value="1"/>
</dbReference>
<dbReference type="PANTHER" id="PTHR43448">
    <property type="entry name" value="PROTOHEME IX FARNESYLTRANSFERASE, MITOCHONDRIAL"/>
    <property type="match status" value="1"/>
</dbReference>
<dbReference type="PANTHER" id="PTHR43448:SF2">
    <property type="entry name" value="PROTOHEME IX FARNESYLTRANSFERASE, MITOCHONDRIAL"/>
    <property type="match status" value="1"/>
</dbReference>
<dbReference type="Pfam" id="PF01040">
    <property type="entry name" value="UbiA"/>
    <property type="match status" value="1"/>
</dbReference>
<dbReference type="PROSITE" id="PS00943">
    <property type="entry name" value="UBIA"/>
    <property type="match status" value="1"/>
</dbReference>
<evidence type="ECO:0000255" key="1">
    <source>
        <dbReference type="HAMAP-Rule" id="MF_00154"/>
    </source>
</evidence>
<protein>
    <recommendedName>
        <fullName evidence="1">Protoheme IX farnesyltransferase</fullName>
        <ecNumber evidence="1">2.5.1.141</ecNumber>
    </recommendedName>
    <alternativeName>
        <fullName evidence="1">Heme B farnesyltransferase</fullName>
    </alternativeName>
    <alternativeName>
        <fullName evidence="1">Heme O synthase</fullName>
    </alternativeName>
</protein>
<sequence>MNHATSELHDESAVTSIPETTRLQDLKALVKMGIVNSNTLTVFTGFWLALHFNGLSVMDNLDKLFFTIVGSGLVMAGVCCLNNYIDRDIDPLMERTKTRPTVTGKYKPGFALTFGLVILLLGFVFLLLTTPMAVLMGFIGAFTYVVLYSLWTKRKYTLNTVVGSISGAVPPLIGWAAIDPSLGHPIAWMLFLIMFIWQIPHFLALAMKRVDEYRNAGIPMLPVVHGFEITKRQIMIWTVCLLPLPFYMSGLGITFMVIATLLNIGWIVLGFYGFRKKDDIKWSVQMFVYSLNYLTILFVSMIVVTFF</sequence>